<sequence>MRLVIGISGASGVVLGYHMLKVLRFFPECETHLVISEGAKLTFGLETDLKIEDVEKLADFVYSNTNLAASISSGSFKTDGMIVIPCSMKTLSGIATGYAENLLIRAADVCLKENRKVVLVPREMPFGKLHIRNMKEASDLGCVIIPPLLTFYNNPQTIEEQINHIIGKILMQFGLEHEKFKAWEGTKDD</sequence>
<organism>
    <name type="scientific">Sedimentibacter hydroxybenzoicus</name>
    <name type="common">Clostridium hydroxybenzoicum</name>
    <dbReference type="NCBI Taxonomy" id="29345"/>
    <lineage>
        <taxon>Bacteria</taxon>
        <taxon>Bacillati</taxon>
        <taxon>Bacillota</taxon>
        <taxon>Tissierellia</taxon>
        <taxon>Sedimentibacter</taxon>
    </lineage>
</organism>
<proteinExistence type="evidence at transcript level"/>
<gene>
    <name evidence="4" type="primary">shdB</name>
</gene>
<protein>
    <recommendedName>
        <fullName evidence="1">Probable UbiX-like flavin prenyltransferase</fullName>
        <ecNumber evidence="1">2.5.1.129</ecNumber>
    </recommendedName>
    <alternativeName>
        <fullName evidence="1">Phenolic acid decarboxylase subunit B</fullName>
        <shortName evidence="1">PAD</shortName>
    </alternativeName>
</protein>
<reference key="1">
    <citation type="journal article" date="1999" name="J. Bacteriol.">
        <title>Cloning, characterization, and expression of a novel gene encoding a reversible 4-hydroxybenzoate decarboxylase from Clostridium hydroxybenzoicum.</title>
        <authorList>
            <person name="Huang J."/>
            <person name="He Z."/>
            <person name="Wiegel J."/>
        </authorList>
    </citation>
    <scope>NUCLEOTIDE SEQUENCE [GENOMIC DNA]</scope>
    <source>
        <strain>ATCC 51151 / DSM 7310 / JW/Z-1</strain>
    </source>
</reference>
<reference key="2">
    <citation type="journal article" date="1990" name="Microb. Ecol.">
        <title>Isolation and partial characterization of a Clostridium species transforming para-hydroxybenzoate and 3,4-dihydroxybenzoate and producing phenols as the final transformation products.</title>
        <authorList>
            <person name="Zhang X."/>
            <person name="Wiegel J."/>
        </authorList>
    </citation>
    <scope>FUNCTION</scope>
    <scope>INDUCTION</scope>
    <source>
        <strain>ATCC 51151 / DSM 7310 / JW/Z-1</strain>
    </source>
</reference>
<reference key="3">
    <citation type="journal article" date="2005" name="Genomics">
        <title>Distribution of genes encoding the microbial non-oxidative reversible hydroxyarylic acid decarboxylases/phenol carboxylases.</title>
        <authorList>
            <person name="Lupa B."/>
            <person name="Lyon D."/>
            <person name="Gibbs M.D."/>
            <person name="Reeves R.A."/>
            <person name="Wiegel J."/>
        </authorList>
    </citation>
    <scope>FUNCTION</scope>
    <source>
        <strain>ATCC 51151 / DSM 7310 / JW/Z-1</strain>
    </source>
</reference>
<dbReference type="EC" id="2.5.1.129" evidence="1"/>
<dbReference type="EMBL" id="AF128880">
    <property type="protein sequence ID" value="AAY67850.1"/>
    <property type="molecule type" value="Genomic_DNA"/>
</dbReference>
<dbReference type="SMR" id="Q4R101"/>
<dbReference type="BRENDA" id="4.1.1.61">
    <property type="organism ID" value="5658"/>
</dbReference>
<dbReference type="GO" id="GO:0016831">
    <property type="term" value="F:carboxy-lyase activity"/>
    <property type="evidence" value="ECO:0007669"/>
    <property type="project" value="TreeGrafter"/>
</dbReference>
<dbReference type="GO" id="GO:0106141">
    <property type="term" value="F:flavin prenyltransferase activity"/>
    <property type="evidence" value="ECO:0007669"/>
    <property type="project" value="UniProtKB-EC"/>
</dbReference>
<dbReference type="GO" id="GO:0009056">
    <property type="term" value="P:catabolic process"/>
    <property type="evidence" value="ECO:0007669"/>
    <property type="project" value="UniProtKB-KW"/>
</dbReference>
<dbReference type="GO" id="GO:0009636">
    <property type="term" value="P:response to toxic substance"/>
    <property type="evidence" value="ECO:0007669"/>
    <property type="project" value="UniProtKB-KW"/>
</dbReference>
<dbReference type="FunFam" id="3.40.50.1950:FF:000001">
    <property type="entry name" value="Flavin prenyltransferase UbiX"/>
    <property type="match status" value="1"/>
</dbReference>
<dbReference type="Gene3D" id="3.40.50.1950">
    <property type="entry name" value="Flavin prenyltransferase-like"/>
    <property type="match status" value="1"/>
</dbReference>
<dbReference type="HAMAP" id="MF_01984">
    <property type="entry name" value="ubiX_pad"/>
    <property type="match status" value="1"/>
</dbReference>
<dbReference type="HAMAP" id="MF_01986">
    <property type="entry name" value="ubiX_pad_yclB"/>
    <property type="match status" value="1"/>
</dbReference>
<dbReference type="InterPro" id="IPR036551">
    <property type="entry name" value="Flavin_trans-like"/>
</dbReference>
<dbReference type="InterPro" id="IPR003382">
    <property type="entry name" value="Flavoprotein"/>
</dbReference>
<dbReference type="InterPro" id="IPR004507">
    <property type="entry name" value="UbiX-like"/>
</dbReference>
<dbReference type="InterPro" id="IPR032901">
    <property type="entry name" value="UbiX_pad_YclB"/>
</dbReference>
<dbReference type="NCBIfam" id="NF004685">
    <property type="entry name" value="PRK06029.1"/>
    <property type="match status" value="1"/>
</dbReference>
<dbReference type="NCBIfam" id="TIGR00421">
    <property type="entry name" value="ubiX_pad"/>
    <property type="match status" value="1"/>
</dbReference>
<dbReference type="PANTHER" id="PTHR43374">
    <property type="entry name" value="FLAVIN PRENYLTRANSFERASE"/>
    <property type="match status" value="1"/>
</dbReference>
<dbReference type="PANTHER" id="PTHR43374:SF1">
    <property type="entry name" value="FLAVIN PRENYLTRANSFERASE PAD1, MITOCHONDRIAL"/>
    <property type="match status" value="1"/>
</dbReference>
<dbReference type="Pfam" id="PF02441">
    <property type="entry name" value="Flavoprotein"/>
    <property type="match status" value="1"/>
</dbReference>
<dbReference type="SUPFAM" id="SSF52507">
    <property type="entry name" value="Homo-oligomeric flavin-containing Cys decarboxylases, HFCD"/>
    <property type="match status" value="1"/>
</dbReference>
<evidence type="ECO:0000255" key="1">
    <source>
        <dbReference type="HAMAP-Rule" id="MF_01986"/>
    </source>
</evidence>
<evidence type="ECO:0000269" key="2">
    <source>
    </source>
</evidence>
<evidence type="ECO:0000269" key="3">
    <source>
    </source>
</evidence>
<evidence type="ECO:0000303" key="4">
    <source>
    </source>
</evidence>
<evidence type="ECO:0000305" key="5"/>
<evidence type="ECO:0000305" key="6">
    <source>
    </source>
</evidence>
<comment type="function">
    <text evidence="1 2 3">Involved in the non-oxidative decarboxylation and detoxification of phenolic derivatives under anaerobic conditions (PubMed:15979273, PubMed:24193968). Flavin prenyltransferase that catalyzes the synthesis of the prenylated FMN cofactor (prenyl-FMN) for phenolic acid decarboxylase (By similarity).</text>
</comment>
<comment type="catalytic activity">
    <reaction evidence="1">
        <text>dimethylallyl phosphate + FMNH2 = prenylated FMNH2 + phosphate</text>
        <dbReference type="Rhea" id="RHEA:37743"/>
        <dbReference type="ChEBI" id="CHEBI:43474"/>
        <dbReference type="ChEBI" id="CHEBI:57618"/>
        <dbReference type="ChEBI" id="CHEBI:87467"/>
        <dbReference type="ChEBI" id="CHEBI:88052"/>
        <dbReference type="EC" id="2.5.1.129"/>
    </reaction>
</comment>
<comment type="subunit">
    <text evidence="1">Homododecamer.</text>
</comment>
<comment type="induction">
    <text evidence="6">By 4-hydroxybenzoate and 3,4-dihydroxybenzoate.</text>
</comment>
<comment type="miscellaneous">
    <text evidence="5">It is not known, if phenolic acid decarboxylase forms a complex composed of ShdB, ShdC and ShdD. The term subunit is often used in reference to the operon, however there is no experimental evidence to prove the existence of the complex.</text>
</comment>
<comment type="similarity">
    <text evidence="1">Belongs to the UbiX/PAD1 family. YclB subfamily.</text>
</comment>
<name>PADL_SEDHY</name>
<keyword id="KW-0058">Aromatic hydrocarbons catabolism</keyword>
<keyword id="KW-0216">Detoxification</keyword>
<keyword id="KW-0285">Flavoprotein</keyword>
<keyword id="KW-0288">FMN</keyword>
<keyword id="KW-0637">Prenyltransferase</keyword>
<keyword id="KW-0808">Transferase</keyword>
<accession>Q4R101</accession>
<feature type="chain" id="PRO_0000434528" description="Probable UbiX-like flavin prenyltransferase">
    <location>
        <begin position="1"/>
        <end position="189"/>
    </location>
</feature>
<feature type="binding site" evidence="1">
    <location>
        <begin position="9"/>
        <end position="11"/>
    </location>
    <ligand>
        <name>FMN</name>
        <dbReference type="ChEBI" id="CHEBI:58210"/>
    </ligand>
</feature>
<feature type="binding site" evidence="1">
    <location>
        <position position="36"/>
    </location>
    <ligand>
        <name>FMN</name>
        <dbReference type="ChEBI" id="CHEBI:58210"/>
    </ligand>
</feature>
<feature type="binding site" evidence="1">
    <location>
        <begin position="87"/>
        <end position="90"/>
    </location>
    <ligand>
        <name>FMN</name>
        <dbReference type="ChEBI" id="CHEBI:58210"/>
    </ligand>
</feature>
<feature type="binding site" evidence="1">
    <location>
        <position position="122"/>
    </location>
    <ligand>
        <name>FMN</name>
        <dbReference type="ChEBI" id="CHEBI:58210"/>
    </ligand>
</feature>